<sequence length="97" mass="11280">MAKEQTDRTTLDLFAHERRPGRPKTNPLSRDEQLRINKRNQLKRDKVRGLKRVELKLNAEAVEALNELAESRNMSRSELIEEMLMQQLAALRSQGIV</sequence>
<proteinExistence type="evidence at protein level"/>
<organism>
    <name type="scientific">Escherichia coli (strain K12)</name>
    <dbReference type="NCBI Taxonomy" id="83333"/>
    <lineage>
        <taxon>Bacteria</taxon>
        <taxon>Pseudomonadati</taxon>
        <taxon>Pseudomonadota</taxon>
        <taxon>Gammaproteobacteria</taxon>
        <taxon>Enterobacterales</taxon>
        <taxon>Enterobacteriaceae</taxon>
        <taxon>Escherichia</taxon>
    </lineage>
</organism>
<comment type="interaction">
    <interactant intactId="EBI-9138393">
        <id>P0AAU7</id>
    </interactant>
    <interactant intactId="EBI-1120353">
        <id>Q46864</id>
        <label>mqsA</label>
    </interactant>
    <organismsDiffer>false</organismsDiffer>
    <experiments>2</experiments>
</comment>
<comment type="induction">
    <text evidence="2">Expressed at a low level, probably partially repressed by LexA, induced by DNA damage.</text>
</comment>
<dbReference type="EMBL" id="U00096">
    <property type="protein sequence ID" value="AAC73779.2"/>
    <property type="molecule type" value="Genomic_DNA"/>
</dbReference>
<dbReference type="EMBL" id="AP009048">
    <property type="protein sequence ID" value="BAA35334.2"/>
    <property type="molecule type" value="Genomic_DNA"/>
</dbReference>
<dbReference type="PIR" id="D64803">
    <property type="entry name" value="D64803"/>
</dbReference>
<dbReference type="RefSeq" id="NP_415211.2">
    <property type="nucleotide sequence ID" value="NC_000913.3"/>
</dbReference>
<dbReference type="RefSeq" id="WP_001300829.1">
    <property type="nucleotide sequence ID" value="NZ_STEB01000044.1"/>
</dbReference>
<dbReference type="SMR" id="P0AAU7"/>
<dbReference type="BioGRID" id="4261908">
    <property type="interactions" value="108"/>
</dbReference>
<dbReference type="BioGRID" id="849668">
    <property type="interactions" value="3"/>
</dbReference>
<dbReference type="FunCoup" id="P0AAU7">
    <property type="interactions" value="49"/>
</dbReference>
<dbReference type="IntAct" id="P0AAU7">
    <property type="interactions" value="3"/>
</dbReference>
<dbReference type="STRING" id="511145.b0685"/>
<dbReference type="jPOST" id="P0AAU7"/>
<dbReference type="PaxDb" id="511145-b0685"/>
<dbReference type="EnsemblBacteria" id="AAC73779">
    <property type="protein sequence ID" value="AAC73779"/>
    <property type="gene ID" value="b0685"/>
</dbReference>
<dbReference type="GeneID" id="93776799"/>
<dbReference type="GeneID" id="945291"/>
<dbReference type="KEGG" id="ecj:JW5816"/>
<dbReference type="KEGG" id="eco:b0685"/>
<dbReference type="KEGG" id="ecoc:C3026_03415"/>
<dbReference type="PATRIC" id="fig|511145.12.peg.714"/>
<dbReference type="EchoBASE" id="EB1724"/>
<dbReference type="eggNOG" id="ENOG5032TX0">
    <property type="taxonomic scope" value="Bacteria"/>
</dbReference>
<dbReference type="InParanoid" id="P0AAU7"/>
<dbReference type="OMA" id="QLRVNKR"/>
<dbReference type="OrthoDB" id="6105869at2"/>
<dbReference type="PhylomeDB" id="P0AAU7"/>
<dbReference type="BioCyc" id="EcoCyc:EG11775-MONOMER"/>
<dbReference type="PRO" id="PR:P0AAU7"/>
<dbReference type="Proteomes" id="UP000000625">
    <property type="component" value="Chromosome"/>
</dbReference>
<dbReference type="GO" id="GO:0006974">
    <property type="term" value="P:DNA damage response"/>
    <property type="evidence" value="ECO:0000315"/>
    <property type="project" value="EcoCyc"/>
</dbReference>
<dbReference type="GO" id="GO:0006355">
    <property type="term" value="P:regulation of DNA-templated transcription"/>
    <property type="evidence" value="ECO:0007669"/>
    <property type="project" value="InterPro"/>
</dbReference>
<dbReference type="CDD" id="cd21631">
    <property type="entry name" value="RHH_CopG_NikR-like"/>
    <property type="match status" value="1"/>
</dbReference>
<dbReference type="InterPro" id="IPR002145">
    <property type="entry name" value="CopG"/>
</dbReference>
<dbReference type="InterPro" id="IPR010985">
    <property type="entry name" value="Ribbon_hlx_hlx"/>
</dbReference>
<dbReference type="NCBIfam" id="NF008671">
    <property type="entry name" value="PRK11675.1"/>
    <property type="match status" value="1"/>
</dbReference>
<dbReference type="Pfam" id="PF01402">
    <property type="entry name" value="RHH_1"/>
    <property type="match status" value="1"/>
</dbReference>
<dbReference type="SUPFAM" id="SSF47598">
    <property type="entry name" value="Ribbon-helix-helix"/>
    <property type="match status" value="1"/>
</dbReference>
<protein>
    <recommendedName>
        <fullName>Uncharacterized protein YbfE</fullName>
    </recommendedName>
</protein>
<name>YBFE_ECOLI</name>
<gene>
    <name type="primary">ybfE</name>
    <name type="ordered locus">b0685</name>
    <name type="ordered locus">JW5816</name>
</gene>
<feature type="chain" id="PRO_0000168688" description="Uncharacterized protein YbfE">
    <location>
        <begin position="1"/>
        <end position="97"/>
    </location>
</feature>
<feature type="region of interest" description="Disordered" evidence="1">
    <location>
        <begin position="1"/>
        <end position="30"/>
    </location>
</feature>
<feature type="compositionally biased region" description="Basic and acidic residues" evidence="1">
    <location>
        <begin position="1"/>
        <end position="20"/>
    </location>
</feature>
<reference key="1">
    <citation type="journal article" date="1996" name="DNA Res.">
        <title>A 718-kb DNA sequence of the Escherichia coli K-12 genome corresponding to the 12.7-28.0 min region on the linkage map.</title>
        <authorList>
            <person name="Oshima T."/>
            <person name="Aiba H."/>
            <person name="Baba T."/>
            <person name="Fujita K."/>
            <person name="Hayashi K."/>
            <person name="Honjo A."/>
            <person name="Ikemoto K."/>
            <person name="Inada T."/>
            <person name="Itoh T."/>
            <person name="Kajihara M."/>
            <person name="Kanai K."/>
            <person name="Kashimoto K."/>
            <person name="Kimura S."/>
            <person name="Kitagawa M."/>
            <person name="Makino K."/>
            <person name="Masuda S."/>
            <person name="Miki T."/>
            <person name="Mizobuchi K."/>
            <person name="Mori H."/>
            <person name="Motomura K."/>
            <person name="Nakamura Y."/>
            <person name="Nashimoto H."/>
            <person name="Nishio Y."/>
            <person name="Saito N."/>
            <person name="Sampei G."/>
            <person name="Seki Y."/>
            <person name="Tagami H."/>
            <person name="Takemoto K."/>
            <person name="Wada C."/>
            <person name="Yamamoto Y."/>
            <person name="Yano M."/>
            <person name="Horiuchi T."/>
        </authorList>
    </citation>
    <scope>NUCLEOTIDE SEQUENCE [LARGE SCALE GENOMIC DNA]</scope>
    <source>
        <strain>K12 / W3110 / ATCC 27325 / DSM 5911</strain>
    </source>
</reference>
<reference key="2">
    <citation type="journal article" date="1997" name="Science">
        <title>The complete genome sequence of Escherichia coli K-12.</title>
        <authorList>
            <person name="Blattner F.R."/>
            <person name="Plunkett G. III"/>
            <person name="Bloch C.A."/>
            <person name="Perna N.T."/>
            <person name="Burland V."/>
            <person name="Riley M."/>
            <person name="Collado-Vides J."/>
            <person name="Glasner J.D."/>
            <person name="Rode C.K."/>
            <person name="Mayhew G.F."/>
            <person name="Gregor J."/>
            <person name="Davis N.W."/>
            <person name="Kirkpatrick H.A."/>
            <person name="Goeden M.A."/>
            <person name="Rose D.J."/>
            <person name="Mau B."/>
            <person name="Shao Y."/>
        </authorList>
    </citation>
    <scope>NUCLEOTIDE SEQUENCE [LARGE SCALE GENOMIC DNA]</scope>
    <source>
        <strain>K12 / MG1655 / ATCC 47076</strain>
    </source>
</reference>
<reference key="3">
    <citation type="journal article" date="2006" name="Mol. Syst. Biol.">
        <title>Highly accurate genome sequences of Escherichia coli K-12 strains MG1655 and W3110.</title>
        <authorList>
            <person name="Hayashi K."/>
            <person name="Morooka N."/>
            <person name="Yamamoto Y."/>
            <person name="Fujita K."/>
            <person name="Isono K."/>
            <person name="Choi S."/>
            <person name="Ohtsubo E."/>
            <person name="Baba T."/>
            <person name="Wanner B.L."/>
            <person name="Mori H."/>
            <person name="Horiuchi T."/>
        </authorList>
    </citation>
    <scope>NUCLEOTIDE SEQUENCE [LARGE SCALE GENOMIC DNA]</scope>
    <source>
        <strain>K12 / W3110 / ATCC 27325 / DSM 5911</strain>
    </source>
</reference>
<reference key="4">
    <citation type="journal article" date="2000" name="Mol. Microbiol.">
        <title>Identification of additional genes belonging to the LexA regulon in Escherichia coli.</title>
        <authorList>
            <person name="Fernandez De Henestrosa A.R."/>
            <person name="Ogi T."/>
            <person name="Aoyagi S."/>
            <person name="Chafin D."/>
            <person name="Hayes J.J."/>
            <person name="Ohmori H."/>
            <person name="Woodgate R."/>
        </authorList>
    </citation>
    <scope>REGULATION BY LEXA</scope>
    <scope>INDUCTION</scope>
    <source>
        <strain>K12 / RW118</strain>
    </source>
</reference>
<evidence type="ECO:0000256" key="1">
    <source>
        <dbReference type="SAM" id="MobiDB-lite"/>
    </source>
</evidence>
<evidence type="ECO:0000269" key="2">
    <source>
    </source>
</evidence>
<keyword id="KW-1185">Reference proteome</keyword>
<accession>P0AAU7</accession>
<accession>P75735</accession>